<organism>
    <name type="scientific">Staphylococcus haemolyticus (strain JCSC1435)</name>
    <dbReference type="NCBI Taxonomy" id="279808"/>
    <lineage>
        <taxon>Bacteria</taxon>
        <taxon>Bacillati</taxon>
        <taxon>Bacillota</taxon>
        <taxon>Bacilli</taxon>
        <taxon>Bacillales</taxon>
        <taxon>Staphylococcaceae</taxon>
        <taxon>Staphylococcus</taxon>
    </lineage>
</organism>
<proteinExistence type="predicted"/>
<accession>Q4L6I5</accession>
<dbReference type="EMBL" id="AP006716">
    <property type="protein sequence ID" value="BAE04740.1"/>
    <property type="molecule type" value="Genomic_DNA"/>
</dbReference>
<dbReference type="SMR" id="Q4L6I5"/>
<dbReference type="KEGG" id="sha:SH1431"/>
<dbReference type="eggNOG" id="COG1388">
    <property type="taxonomic scope" value="Bacteria"/>
</dbReference>
<dbReference type="HOGENOM" id="CLU_043950_0_0_9"/>
<dbReference type="OrthoDB" id="2583609at2"/>
<dbReference type="PRO" id="PR:Q4L6I5"/>
<dbReference type="Proteomes" id="UP000000543">
    <property type="component" value="Chromosome"/>
</dbReference>
<dbReference type="GO" id="GO:0005886">
    <property type="term" value="C:plasma membrane"/>
    <property type="evidence" value="ECO:0007669"/>
    <property type="project" value="UniProtKB-SubCell"/>
</dbReference>
<dbReference type="CDD" id="cd00118">
    <property type="entry name" value="LysM"/>
    <property type="match status" value="1"/>
</dbReference>
<dbReference type="Gene3D" id="3.10.350.10">
    <property type="entry name" value="LysM domain"/>
    <property type="match status" value="1"/>
</dbReference>
<dbReference type="InterPro" id="IPR018392">
    <property type="entry name" value="LysM_dom"/>
</dbReference>
<dbReference type="InterPro" id="IPR036779">
    <property type="entry name" value="LysM_dom_sf"/>
</dbReference>
<dbReference type="NCBIfam" id="NF033598">
    <property type="entry name" value="elast_bind_EbpS"/>
    <property type="match status" value="1"/>
</dbReference>
<dbReference type="Pfam" id="PF01476">
    <property type="entry name" value="LysM"/>
    <property type="match status" value="1"/>
</dbReference>
<dbReference type="SMART" id="SM00257">
    <property type="entry name" value="LysM"/>
    <property type="match status" value="1"/>
</dbReference>
<dbReference type="SUPFAM" id="SSF54106">
    <property type="entry name" value="LysM domain"/>
    <property type="match status" value="1"/>
</dbReference>
<dbReference type="PROSITE" id="PS51782">
    <property type="entry name" value="LYSM"/>
    <property type="match status" value="1"/>
</dbReference>
<name>EBPS_STAHJ</name>
<evidence type="ECO:0000255" key="1"/>
<evidence type="ECO:0000255" key="2">
    <source>
        <dbReference type="PROSITE-ProRule" id="PRU01118"/>
    </source>
</evidence>
<evidence type="ECO:0000256" key="3">
    <source>
        <dbReference type="SAM" id="MobiDB-lite"/>
    </source>
</evidence>
<evidence type="ECO:0000305" key="4"/>
<sequence length="539" mass="60072">MSKNNFRDDFEKNRQSINSDDQFEDNTNEFDENSNESNDFDNQSDQQFPPRNAQRRQRRRNQATNKNRKFGNQNSDSNANGSLDDRHDEDSFNELQHNQQENHLDNEPIHKDDKLSSEKDFNNDASRRNNRHEASNRKHDKDYDNGSLNDDDRHRRNHEEGIDERQDNRNHKDQQNKKSRHGKDAAIAGGAGVAGAAGAKAAKDKRKKDEHHDSKYNEHKDDRDLNNDNQFDQNRKHDKDLHDDHRDAKDNHSKEEPKKGNKGKKAAVGAGAAGAAGAAGVAAAKHKKDHKNNNHKDNHSHNRDHQDDHRNHKHEDGNDGFQAHNGKKKRGLAGILLPLIALLLILAALAIFIGMYLNNDKKDSNQADNKTEQTANKDNNKDSKDKASNDSDKDKASSDKDKDKATNDDDSNDKATTDNDSSNNSSDDNSSSSDNSTSSNSSDNSSSSDNNGNNSNSDNNNGNSQATSNNSSQSNSNNNQSNSSNSGQQTHVVSGNENLYRIAIQYYGEGTVENVNKLKQANGLSSNNISNGQKLIIPQ</sequence>
<feature type="chain" id="PRO_0000271743" description="Probable elastin-binding protein EbpS">
    <location>
        <begin position="1"/>
        <end position="539"/>
    </location>
</feature>
<feature type="transmembrane region" description="Helical" evidence="1">
    <location>
        <begin position="335"/>
        <end position="355"/>
    </location>
</feature>
<feature type="domain" description="LysM" evidence="2">
    <location>
        <begin position="489"/>
        <end position="537"/>
    </location>
</feature>
<feature type="region of interest" description="Disordered" evidence="3">
    <location>
        <begin position="1"/>
        <end position="324"/>
    </location>
</feature>
<feature type="region of interest" description="Disordered" evidence="3">
    <location>
        <begin position="362"/>
        <end position="491"/>
    </location>
</feature>
<feature type="compositionally biased region" description="Basic and acidic residues" evidence="3">
    <location>
        <begin position="1"/>
        <end position="14"/>
    </location>
</feature>
<feature type="compositionally biased region" description="Acidic residues" evidence="3">
    <location>
        <begin position="21"/>
        <end position="34"/>
    </location>
</feature>
<feature type="compositionally biased region" description="Low complexity" evidence="3">
    <location>
        <begin position="35"/>
        <end position="52"/>
    </location>
</feature>
<feature type="compositionally biased region" description="Basic residues" evidence="3">
    <location>
        <begin position="53"/>
        <end position="69"/>
    </location>
</feature>
<feature type="compositionally biased region" description="Polar residues" evidence="3">
    <location>
        <begin position="70"/>
        <end position="81"/>
    </location>
</feature>
<feature type="compositionally biased region" description="Basic and acidic residues" evidence="3">
    <location>
        <begin position="100"/>
        <end position="176"/>
    </location>
</feature>
<feature type="compositionally biased region" description="Basic and acidic residues" evidence="3">
    <location>
        <begin position="210"/>
        <end position="226"/>
    </location>
</feature>
<feature type="compositionally biased region" description="Basic and acidic residues" evidence="3">
    <location>
        <begin position="233"/>
        <end position="259"/>
    </location>
</feature>
<feature type="compositionally biased region" description="Low complexity" evidence="3">
    <location>
        <begin position="266"/>
        <end position="283"/>
    </location>
</feature>
<feature type="compositionally biased region" description="Basic and acidic residues" evidence="3">
    <location>
        <begin position="291"/>
        <end position="317"/>
    </location>
</feature>
<feature type="compositionally biased region" description="Basic and acidic residues" evidence="3">
    <location>
        <begin position="362"/>
        <end position="371"/>
    </location>
</feature>
<feature type="compositionally biased region" description="Basic and acidic residues" evidence="3">
    <location>
        <begin position="378"/>
        <end position="417"/>
    </location>
</feature>
<feature type="compositionally biased region" description="Low complexity" evidence="3">
    <location>
        <begin position="418"/>
        <end position="490"/>
    </location>
</feature>
<protein>
    <recommendedName>
        <fullName>Probable elastin-binding protein EbpS</fullName>
    </recommendedName>
</protein>
<keyword id="KW-1003">Cell membrane</keyword>
<keyword id="KW-0472">Membrane</keyword>
<keyword id="KW-0812">Transmembrane</keyword>
<keyword id="KW-1133">Transmembrane helix</keyword>
<gene>
    <name type="primary">ebpS</name>
    <name type="ordered locus">SH1431</name>
</gene>
<reference key="1">
    <citation type="journal article" date="2005" name="J. Bacteriol.">
        <title>Whole-genome sequencing of Staphylococcus haemolyticus uncovers the extreme plasticity of its genome and the evolution of human-colonizing staphylococcal species.</title>
        <authorList>
            <person name="Takeuchi F."/>
            <person name="Watanabe S."/>
            <person name="Baba T."/>
            <person name="Yuzawa H."/>
            <person name="Ito T."/>
            <person name="Morimoto Y."/>
            <person name="Kuroda M."/>
            <person name="Cui L."/>
            <person name="Takahashi M."/>
            <person name="Ankai A."/>
            <person name="Baba S."/>
            <person name="Fukui S."/>
            <person name="Lee J.C."/>
            <person name="Hiramatsu K."/>
        </authorList>
    </citation>
    <scope>NUCLEOTIDE SEQUENCE [LARGE SCALE GENOMIC DNA]</scope>
    <source>
        <strain>JCSC1435</strain>
    </source>
</reference>
<comment type="subcellular location">
    <subcellularLocation>
        <location evidence="4">Cell membrane</location>
        <topology evidence="4">Single-pass membrane protein</topology>
    </subcellularLocation>
</comment>